<protein>
    <recommendedName>
        <fullName>Protein C10</fullName>
    </recommendedName>
</protein>
<feature type="initiator methionine" description="Removed" evidence="5 6">
    <location>
        <position position="1"/>
    </location>
</feature>
<feature type="chain" id="PRO_0000065034" description="Protein C10">
    <location>
        <begin position="2"/>
        <end position="126"/>
    </location>
</feature>
<feature type="modified residue" description="N-acetylalanine" evidence="5 6">
    <location>
        <position position="2"/>
    </location>
</feature>
<feature type="sequence variant" id="VAR_069774" description="In TEMTYS; dbSNP:rs587776955." evidence="1">
    <original>L</original>
    <variation>Q</variation>
    <location>
        <position position="51"/>
    </location>
</feature>
<sequence length="126" mass="13178">MASASTQPAALSAEQAKVVLAEVIQAFSAPENAVRMDEARDNACNDMGKMLQFVLPVATQIQQEVIKAYGFSCDGEGVLKFARLVKSYEAQDPEIASLSGKLKALFLPPMTLPPHGPAAGGSVAAS</sequence>
<evidence type="ECO:0000269" key="1">
    <source>
    </source>
</evidence>
<evidence type="ECO:0000269" key="2">
    <source>
    </source>
</evidence>
<evidence type="ECO:0000269" key="3">
    <source>
    </source>
</evidence>
<evidence type="ECO:0000305" key="4"/>
<evidence type="ECO:0007744" key="5">
    <source>
    </source>
</evidence>
<evidence type="ECO:0007744" key="6">
    <source>
    </source>
</evidence>
<organism>
    <name type="scientific">Homo sapiens</name>
    <name type="common">Human</name>
    <dbReference type="NCBI Taxonomy" id="9606"/>
    <lineage>
        <taxon>Eukaryota</taxon>
        <taxon>Metazoa</taxon>
        <taxon>Chordata</taxon>
        <taxon>Craniata</taxon>
        <taxon>Vertebrata</taxon>
        <taxon>Euteleostomi</taxon>
        <taxon>Mammalia</taxon>
        <taxon>Eutheria</taxon>
        <taxon>Euarchontoglires</taxon>
        <taxon>Primates</taxon>
        <taxon>Haplorrhini</taxon>
        <taxon>Catarrhini</taxon>
        <taxon>Hominidae</taxon>
        <taxon>Homo</taxon>
    </lineage>
</organism>
<proteinExistence type="evidence at protein level"/>
<dbReference type="EMBL" id="U47924">
    <property type="protein sequence ID" value="AAB51329.1"/>
    <property type="molecule type" value="Genomic_DNA"/>
</dbReference>
<dbReference type="EMBL" id="AK311912">
    <property type="protein sequence ID" value="BAG34853.1"/>
    <property type="molecule type" value="mRNA"/>
</dbReference>
<dbReference type="EMBL" id="CH471116">
    <property type="protein sequence ID" value="EAW88705.1"/>
    <property type="molecule type" value="Genomic_DNA"/>
</dbReference>
<dbReference type="EMBL" id="BC009925">
    <property type="protein sequence ID" value="AAH09925.1"/>
    <property type="molecule type" value="mRNA"/>
</dbReference>
<dbReference type="CCDS" id="CCDS8571.1"/>
<dbReference type="RefSeq" id="NP_001288763.1">
    <property type="nucleotide sequence ID" value="NM_001301834.1"/>
</dbReference>
<dbReference type="RefSeq" id="NP_612434.1">
    <property type="nucleotide sequence ID" value="NM_138425.4"/>
</dbReference>
<dbReference type="SMR" id="Q99622"/>
<dbReference type="BioGRID" id="125237">
    <property type="interactions" value="43"/>
</dbReference>
<dbReference type="FunCoup" id="Q99622">
    <property type="interactions" value="672"/>
</dbReference>
<dbReference type="IntAct" id="Q99622">
    <property type="interactions" value="31"/>
</dbReference>
<dbReference type="STRING" id="9606.ENSP00000229281"/>
<dbReference type="iPTMnet" id="Q99622"/>
<dbReference type="PhosphoSitePlus" id="Q99622"/>
<dbReference type="BioMuta" id="C12orf57"/>
<dbReference type="jPOST" id="Q99622"/>
<dbReference type="MassIVE" id="Q99622"/>
<dbReference type="PaxDb" id="9606-ENSP00000229281"/>
<dbReference type="PeptideAtlas" id="Q99622"/>
<dbReference type="ProteomicsDB" id="78363"/>
<dbReference type="Pumba" id="Q99622"/>
<dbReference type="TopDownProteomics" id="Q99622"/>
<dbReference type="Antibodypedia" id="22799">
    <property type="antibodies" value="44 antibodies from 11 providers"/>
</dbReference>
<dbReference type="DNASU" id="113246"/>
<dbReference type="Ensembl" id="ENST00000229281.6">
    <property type="protein sequence ID" value="ENSP00000229281.5"/>
    <property type="gene ID" value="ENSG00000111678.11"/>
</dbReference>
<dbReference type="Ensembl" id="ENST00000545581.5">
    <property type="protein sequence ID" value="ENSP00000440602.1"/>
    <property type="gene ID" value="ENSG00000111678.11"/>
</dbReference>
<dbReference type="GeneID" id="113246"/>
<dbReference type="KEGG" id="hsa:113246"/>
<dbReference type="MANE-Select" id="ENST00000229281.6">
    <property type="protein sequence ID" value="ENSP00000229281.5"/>
    <property type="RefSeq nucleotide sequence ID" value="NM_138425.4"/>
    <property type="RefSeq protein sequence ID" value="NP_612434.1"/>
</dbReference>
<dbReference type="UCSC" id="uc001qrz.4">
    <property type="organism name" value="human"/>
</dbReference>
<dbReference type="AGR" id="HGNC:29521"/>
<dbReference type="CTD" id="113246"/>
<dbReference type="DisGeNET" id="113246"/>
<dbReference type="GeneCards" id="C12orf57"/>
<dbReference type="HGNC" id="HGNC:29521">
    <property type="gene designation" value="C12orf57"/>
</dbReference>
<dbReference type="HPA" id="ENSG00000111678">
    <property type="expression patterns" value="Low tissue specificity"/>
</dbReference>
<dbReference type="MalaCards" id="C12orf57"/>
<dbReference type="MIM" id="218340">
    <property type="type" value="phenotype"/>
</dbReference>
<dbReference type="MIM" id="615140">
    <property type="type" value="gene"/>
</dbReference>
<dbReference type="neXtProt" id="NX_Q99622"/>
<dbReference type="OpenTargets" id="ENSG00000111678"/>
<dbReference type="Orphanet" id="1777">
    <property type="disease" value="Temtamy syndrome"/>
</dbReference>
<dbReference type="PharmGKB" id="PA143485386"/>
<dbReference type="VEuPathDB" id="HostDB:ENSG00000111678"/>
<dbReference type="eggNOG" id="ENOG502S2W0">
    <property type="taxonomic scope" value="Eukaryota"/>
</dbReference>
<dbReference type="GeneTree" id="ENSGT00390000005242"/>
<dbReference type="HOGENOM" id="CLU_144250_1_0_1"/>
<dbReference type="InParanoid" id="Q99622"/>
<dbReference type="OMA" id="GNDMMKM"/>
<dbReference type="OrthoDB" id="75738at2759"/>
<dbReference type="PAN-GO" id="Q99622">
    <property type="GO annotations" value="1 GO annotation based on evolutionary models"/>
</dbReference>
<dbReference type="PhylomeDB" id="Q99622"/>
<dbReference type="TreeFam" id="TF323852"/>
<dbReference type="PathwayCommons" id="Q99622"/>
<dbReference type="SignaLink" id="Q99622"/>
<dbReference type="BioGRID-ORCS" id="113246">
    <property type="hits" value="21 hits in 1133 CRISPR screens"/>
</dbReference>
<dbReference type="ChiTaRS" id="C12orf57">
    <property type="organism name" value="human"/>
</dbReference>
<dbReference type="GenomeRNAi" id="113246"/>
<dbReference type="Pharos" id="Q99622">
    <property type="development level" value="Tbio"/>
</dbReference>
<dbReference type="PRO" id="PR:Q99622"/>
<dbReference type="Proteomes" id="UP000005640">
    <property type="component" value="Chromosome 12"/>
</dbReference>
<dbReference type="RNAct" id="Q99622">
    <property type="molecule type" value="protein"/>
</dbReference>
<dbReference type="Bgee" id="ENSG00000111678">
    <property type="expression patterns" value="Expressed in thymus and 104 other cell types or tissues"/>
</dbReference>
<dbReference type="ExpressionAtlas" id="Q99622">
    <property type="expression patterns" value="baseline and differential"/>
</dbReference>
<dbReference type="GO" id="GO:0005737">
    <property type="term" value="C:cytoplasm"/>
    <property type="evidence" value="ECO:0000314"/>
    <property type="project" value="UniProtKB"/>
</dbReference>
<dbReference type="GO" id="GO:0016607">
    <property type="term" value="C:nuclear speck"/>
    <property type="evidence" value="ECO:0000314"/>
    <property type="project" value="HPA"/>
</dbReference>
<dbReference type="GO" id="GO:0048593">
    <property type="term" value="P:camera-type eye morphogenesis"/>
    <property type="evidence" value="ECO:0000315"/>
    <property type="project" value="UniProtKB"/>
</dbReference>
<dbReference type="GO" id="GO:0050890">
    <property type="term" value="P:cognition"/>
    <property type="evidence" value="ECO:0000315"/>
    <property type="project" value="UniProtKB"/>
</dbReference>
<dbReference type="GO" id="GO:0021540">
    <property type="term" value="P:corpus callosum morphogenesis"/>
    <property type="evidence" value="ECO:0000315"/>
    <property type="project" value="UniProtKB"/>
</dbReference>
<dbReference type="GO" id="GO:0009791">
    <property type="term" value="P:post-embryonic development"/>
    <property type="evidence" value="ECO:0000315"/>
    <property type="project" value="UniProtKB"/>
</dbReference>
<dbReference type="GO" id="GO:0036343">
    <property type="term" value="P:psychomotor behavior"/>
    <property type="evidence" value="ECO:0000315"/>
    <property type="project" value="UniProtKB"/>
</dbReference>
<dbReference type="GO" id="GO:0014819">
    <property type="term" value="P:regulation of skeletal muscle contraction"/>
    <property type="evidence" value="ECO:0000315"/>
    <property type="project" value="UniProtKB"/>
</dbReference>
<dbReference type="GO" id="GO:0021678">
    <property type="term" value="P:third ventricle development"/>
    <property type="evidence" value="ECO:0000315"/>
    <property type="project" value="UniProtKB"/>
</dbReference>
<dbReference type="InterPro" id="IPR026317">
    <property type="entry name" value="P_C10"/>
</dbReference>
<dbReference type="PANTHER" id="PTHR13463">
    <property type="entry name" value="PROTEIN C10"/>
    <property type="match status" value="1"/>
</dbReference>
<dbReference type="PANTHER" id="PTHR13463:SF3">
    <property type="entry name" value="PROTEIN C10"/>
    <property type="match status" value="1"/>
</dbReference>
<dbReference type="Pfam" id="PF14974">
    <property type="entry name" value="P_C10"/>
    <property type="match status" value="1"/>
</dbReference>
<gene>
    <name type="primary">C12orf57</name>
    <name type="synonym">C10</name>
</gene>
<comment type="function">
    <text evidence="2">In brain, may be required for corpus callosum development.</text>
</comment>
<comment type="interaction">
    <interactant intactId="EBI-2808472">
        <id>Q99622</id>
    </interactant>
    <interactant intactId="EBI-13280688">
        <id>Q8NFD2</id>
        <label>ANKK1</label>
    </interactant>
    <organismsDiffer>false</organismsDiffer>
    <experiments>3</experiments>
</comment>
<comment type="interaction">
    <interactant intactId="EBI-2808472">
        <id>Q99622</id>
    </interactant>
    <interactant intactId="EBI-12919766">
        <id>P51460</id>
        <label>INSL3</label>
    </interactant>
    <organismsDiffer>false</organismsDiffer>
    <experiments>3</experiments>
</comment>
<comment type="subcellular location">
    <subcellularLocation>
        <location evidence="2">Cytoplasm</location>
    </subcellularLocation>
</comment>
<comment type="tissue specificity">
    <text evidence="2">Ubiquitously expressed, with higher expression in lung and fetal brain.</text>
</comment>
<comment type="disease" evidence="1 2 3">
    <disease id="DI-03719">
        <name>Temtamy syndrome</name>
        <acronym>TEMTYS</acronym>
        <description>An autosomal recessive syndrome characterized by intellectual disability, variable craniofacial dysmorphism, ocular coloboma, seizures, and brain abnormalities, including abnormalities of the corpus callosum and thalamus.</description>
        <dbReference type="MIM" id="218340"/>
    </disease>
    <text>The disease is caused by variants affecting the gene represented in this entry. A variant resulting in a GUG start codon may be able to produce some protein because of a consensus Kozak sequence, although less efficiently than the wild type. This would explain the phenotypic variability observed.</text>
</comment>
<comment type="similarity">
    <text evidence="4">Belongs to the UPF0456 family.</text>
</comment>
<accession>Q99622</accession>
<accession>B2R4Q6</accession>
<keyword id="KW-0007">Acetylation</keyword>
<keyword id="KW-0963">Cytoplasm</keyword>
<keyword id="KW-0225">Disease variant</keyword>
<keyword id="KW-0991">Intellectual disability</keyword>
<keyword id="KW-1267">Proteomics identification</keyword>
<keyword id="KW-1185">Reference proteome</keyword>
<reference key="1">
    <citation type="journal article" date="1997" name="Genome Res.">
        <title>Large-scale sequencing in human chromosome 12p13: experimental and computational gene structure determination.</title>
        <authorList>
            <person name="Ansari-Lari M.A."/>
            <person name="Shen Y."/>
            <person name="Muzny D.M."/>
            <person name="Lee W."/>
            <person name="Gibbs R.A."/>
        </authorList>
    </citation>
    <scope>NUCLEOTIDE SEQUENCE [GENOMIC DNA]</scope>
    <source>
        <tissue>Brain</tissue>
    </source>
</reference>
<reference key="2">
    <citation type="journal article" date="2004" name="Nat. Genet.">
        <title>Complete sequencing and characterization of 21,243 full-length human cDNAs.</title>
        <authorList>
            <person name="Ota T."/>
            <person name="Suzuki Y."/>
            <person name="Nishikawa T."/>
            <person name="Otsuki T."/>
            <person name="Sugiyama T."/>
            <person name="Irie R."/>
            <person name="Wakamatsu A."/>
            <person name="Hayashi K."/>
            <person name="Sato H."/>
            <person name="Nagai K."/>
            <person name="Kimura K."/>
            <person name="Makita H."/>
            <person name="Sekine M."/>
            <person name="Obayashi M."/>
            <person name="Nishi T."/>
            <person name="Shibahara T."/>
            <person name="Tanaka T."/>
            <person name="Ishii S."/>
            <person name="Yamamoto J."/>
            <person name="Saito K."/>
            <person name="Kawai Y."/>
            <person name="Isono Y."/>
            <person name="Nakamura Y."/>
            <person name="Nagahari K."/>
            <person name="Murakami K."/>
            <person name="Yasuda T."/>
            <person name="Iwayanagi T."/>
            <person name="Wagatsuma M."/>
            <person name="Shiratori A."/>
            <person name="Sudo H."/>
            <person name="Hosoiri T."/>
            <person name="Kaku Y."/>
            <person name="Kodaira H."/>
            <person name="Kondo H."/>
            <person name="Sugawara M."/>
            <person name="Takahashi M."/>
            <person name="Kanda K."/>
            <person name="Yokoi T."/>
            <person name="Furuya T."/>
            <person name="Kikkawa E."/>
            <person name="Omura Y."/>
            <person name="Abe K."/>
            <person name="Kamihara K."/>
            <person name="Katsuta N."/>
            <person name="Sato K."/>
            <person name="Tanikawa M."/>
            <person name="Yamazaki M."/>
            <person name="Ninomiya K."/>
            <person name="Ishibashi T."/>
            <person name="Yamashita H."/>
            <person name="Murakawa K."/>
            <person name="Fujimori K."/>
            <person name="Tanai H."/>
            <person name="Kimata M."/>
            <person name="Watanabe M."/>
            <person name="Hiraoka S."/>
            <person name="Chiba Y."/>
            <person name="Ishida S."/>
            <person name="Ono Y."/>
            <person name="Takiguchi S."/>
            <person name="Watanabe S."/>
            <person name="Yosida M."/>
            <person name="Hotuta T."/>
            <person name="Kusano J."/>
            <person name="Kanehori K."/>
            <person name="Takahashi-Fujii A."/>
            <person name="Hara H."/>
            <person name="Tanase T.-O."/>
            <person name="Nomura Y."/>
            <person name="Togiya S."/>
            <person name="Komai F."/>
            <person name="Hara R."/>
            <person name="Takeuchi K."/>
            <person name="Arita M."/>
            <person name="Imose N."/>
            <person name="Musashino K."/>
            <person name="Yuuki H."/>
            <person name="Oshima A."/>
            <person name="Sasaki N."/>
            <person name="Aotsuka S."/>
            <person name="Yoshikawa Y."/>
            <person name="Matsunawa H."/>
            <person name="Ichihara T."/>
            <person name="Shiohata N."/>
            <person name="Sano S."/>
            <person name="Moriya S."/>
            <person name="Momiyama H."/>
            <person name="Satoh N."/>
            <person name="Takami S."/>
            <person name="Terashima Y."/>
            <person name="Suzuki O."/>
            <person name="Nakagawa S."/>
            <person name="Senoh A."/>
            <person name="Mizoguchi H."/>
            <person name="Goto Y."/>
            <person name="Shimizu F."/>
            <person name="Wakebe H."/>
            <person name="Hishigaki H."/>
            <person name="Watanabe T."/>
            <person name="Sugiyama A."/>
            <person name="Takemoto M."/>
            <person name="Kawakami B."/>
            <person name="Yamazaki M."/>
            <person name="Watanabe K."/>
            <person name="Kumagai A."/>
            <person name="Itakura S."/>
            <person name="Fukuzumi Y."/>
            <person name="Fujimori Y."/>
            <person name="Komiyama M."/>
            <person name="Tashiro H."/>
            <person name="Tanigami A."/>
            <person name="Fujiwara T."/>
            <person name="Ono T."/>
            <person name="Yamada K."/>
            <person name="Fujii Y."/>
            <person name="Ozaki K."/>
            <person name="Hirao M."/>
            <person name="Ohmori Y."/>
            <person name="Kawabata A."/>
            <person name="Hikiji T."/>
            <person name="Kobatake N."/>
            <person name="Inagaki H."/>
            <person name="Ikema Y."/>
            <person name="Okamoto S."/>
            <person name="Okitani R."/>
            <person name="Kawakami T."/>
            <person name="Noguchi S."/>
            <person name="Itoh T."/>
            <person name="Shigeta K."/>
            <person name="Senba T."/>
            <person name="Matsumura K."/>
            <person name="Nakajima Y."/>
            <person name="Mizuno T."/>
            <person name="Morinaga M."/>
            <person name="Sasaki M."/>
            <person name="Togashi T."/>
            <person name="Oyama M."/>
            <person name="Hata H."/>
            <person name="Watanabe M."/>
            <person name="Komatsu T."/>
            <person name="Mizushima-Sugano J."/>
            <person name="Satoh T."/>
            <person name="Shirai Y."/>
            <person name="Takahashi Y."/>
            <person name="Nakagawa K."/>
            <person name="Okumura K."/>
            <person name="Nagase T."/>
            <person name="Nomura N."/>
            <person name="Kikuchi H."/>
            <person name="Masuho Y."/>
            <person name="Yamashita R."/>
            <person name="Nakai K."/>
            <person name="Yada T."/>
            <person name="Nakamura Y."/>
            <person name="Ohara O."/>
            <person name="Isogai T."/>
            <person name="Sugano S."/>
        </authorList>
    </citation>
    <scope>NUCLEOTIDE SEQUENCE [LARGE SCALE MRNA]</scope>
    <source>
        <tissue>Thymus</tissue>
    </source>
</reference>
<reference key="3">
    <citation type="submission" date="2005-09" db="EMBL/GenBank/DDBJ databases">
        <authorList>
            <person name="Mural R.J."/>
            <person name="Istrail S."/>
            <person name="Sutton G.G."/>
            <person name="Florea L."/>
            <person name="Halpern A.L."/>
            <person name="Mobarry C.M."/>
            <person name="Lippert R."/>
            <person name="Walenz B."/>
            <person name="Shatkay H."/>
            <person name="Dew I."/>
            <person name="Miller J.R."/>
            <person name="Flanigan M.J."/>
            <person name="Edwards N.J."/>
            <person name="Bolanos R."/>
            <person name="Fasulo D."/>
            <person name="Halldorsson B.V."/>
            <person name="Hannenhalli S."/>
            <person name="Turner R."/>
            <person name="Yooseph S."/>
            <person name="Lu F."/>
            <person name="Nusskern D.R."/>
            <person name="Shue B.C."/>
            <person name="Zheng X.H."/>
            <person name="Zhong F."/>
            <person name="Delcher A.L."/>
            <person name="Huson D.H."/>
            <person name="Kravitz S.A."/>
            <person name="Mouchard L."/>
            <person name="Reinert K."/>
            <person name="Remington K.A."/>
            <person name="Clark A.G."/>
            <person name="Waterman M.S."/>
            <person name="Eichler E.E."/>
            <person name="Adams M.D."/>
            <person name="Hunkapiller M.W."/>
            <person name="Myers E.W."/>
            <person name="Venter J.C."/>
        </authorList>
    </citation>
    <scope>NUCLEOTIDE SEQUENCE [LARGE SCALE GENOMIC DNA]</scope>
</reference>
<reference key="4">
    <citation type="journal article" date="2004" name="Genome Res.">
        <title>The status, quality, and expansion of the NIH full-length cDNA project: the Mammalian Gene Collection (MGC).</title>
        <authorList>
            <consortium name="The MGC Project Team"/>
        </authorList>
    </citation>
    <scope>NUCLEOTIDE SEQUENCE [LARGE SCALE MRNA]</scope>
    <source>
        <tissue>Lung</tissue>
    </source>
</reference>
<reference key="5">
    <citation type="journal article" date="2009" name="Anal. Chem.">
        <title>Lys-N and trypsin cover complementary parts of the phosphoproteome in a refined SCX-based approach.</title>
        <authorList>
            <person name="Gauci S."/>
            <person name="Helbig A.O."/>
            <person name="Slijper M."/>
            <person name="Krijgsveld J."/>
            <person name="Heck A.J."/>
            <person name="Mohammed S."/>
        </authorList>
    </citation>
    <scope>ACETYLATION [LARGE SCALE ANALYSIS] AT ALA-2</scope>
    <scope>CLEAVAGE OF INITIATOR METHIONINE [LARGE SCALE ANALYSIS]</scope>
    <scope>IDENTIFICATION BY MASS SPECTROMETRY [LARGE SCALE ANALYSIS]</scope>
</reference>
<reference key="6">
    <citation type="journal article" date="2011" name="BMC Syst. Biol.">
        <title>Initial characterization of the human central proteome.</title>
        <authorList>
            <person name="Burkard T.R."/>
            <person name="Planyavsky M."/>
            <person name="Kaupe I."/>
            <person name="Breitwieser F.P."/>
            <person name="Buerckstuemmer T."/>
            <person name="Bennett K.L."/>
            <person name="Superti-Furga G."/>
            <person name="Colinge J."/>
        </authorList>
    </citation>
    <scope>IDENTIFICATION BY MASS SPECTROMETRY [LARGE SCALE ANALYSIS]</scope>
</reference>
<reference key="7">
    <citation type="journal article" date="2012" name="Mol. Cell. Proteomics">
        <title>Comparative large-scale characterisation of plant vs. mammal proteins reveals similar and idiosyncratic N-alpha acetylation features.</title>
        <authorList>
            <person name="Bienvenut W.V."/>
            <person name="Sumpton D."/>
            <person name="Martinez A."/>
            <person name="Lilla S."/>
            <person name="Espagne C."/>
            <person name="Meinnel T."/>
            <person name="Giglione C."/>
        </authorList>
    </citation>
    <scope>ACETYLATION [LARGE SCALE ANALYSIS] AT ALA-2</scope>
    <scope>CLEAVAGE OF INITIATOR METHIONINE [LARGE SCALE ANALYSIS]</scope>
    <scope>IDENTIFICATION BY MASS SPECTROMETRY [LARGE SCALE ANALYSIS]</scope>
</reference>
<reference key="8">
    <citation type="journal article" date="2013" name="Am. J. Hum. Genet.">
        <title>Whole-exome sequencing identifies mutated c12orf57 in recessive corpus callosum hypoplasia.</title>
        <authorList>
            <person name="Akizu N."/>
            <person name="Shembesh N.M."/>
            <person name="Ben-Omran T."/>
            <person name="Bastaki L."/>
            <person name="Al-Tawari A."/>
            <person name="Zaki M.S."/>
            <person name="Koul R."/>
            <person name="Spencer E."/>
            <person name="Rosti R.O."/>
            <person name="Scott E."/>
            <person name="Nickerson E."/>
            <person name="Gabriel S."/>
            <person name="da Gente G."/>
            <person name="Li J."/>
            <person name="Deardorff M.A."/>
            <person name="Conlin L.K."/>
            <person name="Horton M.A."/>
            <person name="Zackai E.H."/>
            <person name="Sherr E.H."/>
            <person name="Gleeson J.G."/>
        </authorList>
    </citation>
    <scope>INVOLVEMENT IN TEMTYS</scope>
    <scope>FUNCTION</scope>
    <scope>SUBCELLULAR LOCATION</scope>
    <scope>TISSUE SPECIFICITY</scope>
</reference>
<reference key="9">
    <citation type="journal article" date="2013" name="Am. J. Med. Genet. A">
        <title>A newly recognized autosomal recessive syndrome affecting neurologic function and vision.</title>
        <authorList>
            <person name="Salih M.A."/>
            <person name="Tzschach A."/>
            <person name="Oystreck D.T."/>
            <person name="Hassan H.H."/>
            <person name="Aldrees A."/>
            <person name="Elmalik S.A."/>
            <person name="El Khashab H.Y."/>
            <person name="Wienker T.F."/>
            <person name="Abu-Amero K.K."/>
            <person name="Bosley T.M."/>
        </authorList>
    </citation>
    <scope>INVOLVEMENT IN TEMTYS</scope>
</reference>
<reference key="10">
    <citation type="journal article" date="2013" name="Am. J. Hum. Genet.">
        <title>Mutations in c12orf57 cause a syndromic form of colobomatous microphthalmia.</title>
        <authorList>
            <person name="Zahrani F."/>
            <person name="Aldahmesh M.A."/>
            <person name="Alshammari M.J."/>
            <person name="Al-Hazzaa S.A."/>
            <person name="Alkuraya F.S."/>
        </authorList>
    </citation>
    <scope>VARIANT TEMTYS GLN-51</scope>
</reference>
<name>C10_HUMAN</name>